<evidence type="ECO:0000255" key="1">
    <source>
        <dbReference type="HAMAP-Rule" id="MF_01367"/>
    </source>
</evidence>
<evidence type="ECO:0000305" key="2"/>
<gene>
    <name evidence="1" type="primary">rplN</name>
    <name type="ordered locus">Pden_0769</name>
</gene>
<proteinExistence type="inferred from homology"/>
<keyword id="KW-1185">Reference proteome</keyword>
<keyword id="KW-0687">Ribonucleoprotein</keyword>
<keyword id="KW-0689">Ribosomal protein</keyword>
<keyword id="KW-0694">RNA-binding</keyword>
<keyword id="KW-0699">rRNA-binding</keyword>
<protein>
    <recommendedName>
        <fullName evidence="1">Large ribosomal subunit protein uL14</fullName>
    </recommendedName>
    <alternativeName>
        <fullName evidence="2">50S ribosomal protein L14</fullName>
    </alternativeName>
</protein>
<dbReference type="EMBL" id="CP000489">
    <property type="protein sequence ID" value="ABL68881.1"/>
    <property type="molecule type" value="Genomic_DNA"/>
</dbReference>
<dbReference type="RefSeq" id="WP_010400243.1">
    <property type="nucleotide sequence ID" value="NC_008686.1"/>
</dbReference>
<dbReference type="SMR" id="A1B037"/>
<dbReference type="STRING" id="318586.Pden_0769"/>
<dbReference type="EnsemblBacteria" id="ABL68881">
    <property type="protein sequence ID" value="ABL68881"/>
    <property type="gene ID" value="Pden_0769"/>
</dbReference>
<dbReference type="GeneID" id="93451993"/>
<dbReference type="KEGG" id="pde:Pden_0769"/>
<dbReference type="eggNOG" id="COG0093">
    <property type="taxonomic scope" value="Bacteria"/>
</dbReference>
<dbReference type="HOGENOM" id="CLU_095071_2_1_5"/>
<dbReference type="OrthoDB" id="9806379at2"/>
<dbReference type="Proteomes" id="UP000000361">
    <property type="component" value="Chromosome 1"/>
</dbReference>
<dbReference type="GO" id="GO:0022625">
    <property type="term" value="C:cytosolic large ribosomal subunit"/>
    <property type="evidence" value="ECO:0007669"/>
    <property type="project" value="TreeGrafter"/>
</dbReference>
<dbReference type="GO" id="GO:0070180">
    <property type="term" value="F:large ribosomal subunit rRNA binding"/>
    <property type="evidence" value="ECO:0007669"/>
    <property type="project" value="TreeGrafter"/>
</dbReference>
<dbReference type="GO" id="GO:0003735">
    <property type="term" value="F:structural constituent of ribosome"/>
    <property type="evidence" value="ECO:0007669"/>
    <property type="project" value="InterPro"/>
</dbReference>
<dbReference type="GO" id="GO:0006412">
    <property type="term" value="P:translation"/>
    <property type="evidence" value="ECO:0007669"/>
    <property type="project" value="UniProtKB-UniRule"/>
</dbReference>
<dbReference type="CDD" id="cd00337">
    <property type="entry name" value="Ribosomal_uL14"/>
    <property type="match status" value="1"/>
</dbReference>
<dbReference type="FunFam" id="2.40.150.20:FF:000001">
    <property type="entry name" value="50S ribosomal protein L14"/>
    <property type="match status" value="1"/>
</dbReference>
<dbReference type="Gene3D" id="2.40.150.20">
    <property type="entry name" value="Ribosomal protein L14"/>
    <property type="match status" value="1"/>
</dbReference>
<dbReference type="HAMAP" id="MF_01367">
    <property type="entry name" value="Ribosomal_uL14"/>
    <property type="match status" value="1"/>
</dbReference>
<dbReference type="InterPro" id="IPR000218">
    <property type="entry name" value="Ribosomal_uL14"/>
</dbReference>
<dbReference type="InterPro" id="IPR005745">
    <property type="entry name" value="Ribosomal_uL14_bac-type"/>
</dbReference>
<dbReference type="InterPro" id="IPR019972">
    <property type="entry name" value="Ribosomal_uL14_CS"/>
</dbReference>
<dbReference type="InterPro" id="IPR036853">
    <property type="entry name" value="Ribosomal_uL14_sf"/>
</dbReference>
<dbReference type="NCBIfam" id="TIGR01067">
    <property type="entry name" value="rplN_bact"/>
    <property type="match status" value="1"/>
</dbReference>
<dbReference type="PANTHER" id="PTHR11761">
    <property type="entry name" value="50S/60S RIBOSOMAL PROTEIN L14/L23"/>
    <property type="match status" value="1"/>
</dbReference>
<dbReference type="PANTHER" id="PTHR11761:SF3">
    <property type="entry name" value="LARGE RIBOSOMAL SUBUNIT PROTEIN UL14M"/>
    <property type="match status" value="1"/>
</dbReference>
<dbReference type="Pfam" id="PF00238">
    <property type="entry name" value="Ribosomal_L14"/>
    <property type="match status" value="1"/>
</dbReference>
<dbReference type="SMART" id="SM01374">
    <property type="entry name" value="Ribosomal_L14"/>
    <property type="match status" value="1"/>
</dbReference>
<dbReference type="SUPFAM" id="SSF50193">
    <property type="entry name" value="Ribosomal protein L14"/>
    <property type="match status" value="1"/>
</dbReference>
<dbReference type="PROSITE" id="PS00049">
    <property type="entry name" value="RIBOSOMAL_L14"/>
    <property type="match status" value="1"/>
</dbReference>
<organism>
    <name type="scientific">Paracoccus denitrificans (strain Pd 1222)</name>
    <dbReference type="NCBI Taxonomy" id="318586"/>
    <lineage>
        <taxon>Bacteria</taxon>
        <taxon>Pseudomonadati</taxon>
        <taxon>Pseudomonadota</taxon>
        <taxon>Alphaproteobacteria</taxon>
        <taxon>Rhodobacterales</taxon>
        <taxon>Paracoccaceae</taxon>
        <taxon>Paracoccus</taxon>
    </lineage>
</organism>
<reference key="1">
    <citation type="submission" date="2006-12" db="EMBL/GenBank/DDBJ databases">
        <title>Complete sequence of chromosome 1 of Paracoccus denitrificans PD1222.</title>
        <authorList>
            <person name="Copeland A."/>
            <person name="Lucas S."/>
            <person name="Lapidus A."/>
            <person name="Barry K."/>
            <person name="Detter J.C."/>
            <person name="Glavina del Rio T."/>
            <person name="Hammon N."/>
            <person name="Israni S."/>
            <person name="Dalin E."/>
            <person name="Tice H."/>
            <person name="Pitluck S."/>
            <person name="Munk A.C."/>
            <person name="Brettin T."/>
            <person name="Bruce D."/>
            <person name="Han C."/>
            <person name="Tapia R."/>
            <person name="Gilna P."/>
            <person name="Schmutz J."/>
            <person name="Larimer F."/>
            <person name="Land M."/>
            <person name="Hauser L."/>
            <person name="Kyrpides N."/>
            <person name="Lykidis A."/>
            <person name="Spiro S."/>
            <person name="Richardson D.J."/>
            <person name="Moir J.W.B."/>
            <person name="Ferguson S.J."/>
            <person name="van Spanning R.J.M."/>
            <person name="Richardson P."/>
        </authorList>
    </citation>
    <scope>NUCLEOTIDE SEQUENCE [LARGE SCALE GENOMIC DNA]</scope>
    <source>
        <strain>Pd 1222</strain>
    </source>
</reference>
<comment type="function">
    <text evidence="1">Binds to 23S rRNA. Forms part of two intersubunit bridges in the 70S ribosome.</text>
</comment>
<comment type="subunit">
    <text evidence="1">Part of the 50S ribosomal subunit. Forms a cluster with proteins L3 and L19. In the 70S ribosome, L14 and L19 interact and together make contacts with the 16S rRNA in bridges B5 and B8.</text>
</comment>
<comment type="similarity">
    <text evidence="1">Belongs to the universal ribosomal protein uL14 family.</text>
</comment>
<accession>A1B037</accession>
<name>RL14_PARDP</name>
<feature type="chain" id="PRO_1000055659" description="Large ribosomal subunit protein uL14">
    <location>
        <begin position="1"/>
        <end position="122"/>
    </location>
</feature>
<sequence>MIQMQTNLDVADNSGARRVQCIKVLGGSHRRYASVGDIIVVSVKEAIPRGRVKKGDVRKAVVVRTAKEVKREDGTSIRFDRNAAVILNNQGEPVGTRIFGPVVRELRAKNFMKIISLAPEVL</sequence>